<evidence type="ECO:0000250" key="1"/>
<evidence type="ECO:0000255" key="2">
    <source>
        <dbReference type="PROSITE-ProRule" id="PRU01210"/>
    </source>
</evidence>
<evidence type="ECO:0000269" key="3">
    <source>
    </source>
</evidence>
<evidence type="ECO:0000305" key="4"/>
<comment type="function">
    <text evidence="1">Inhibits the sodium currents (Nav) in an apparent irreversible manner. Produces small depolarization and induces repetitive firing in squid axons. Is specific for arthropods (crickets, triatomides, crabs and squids), but is non-toxic to mice (By similarity).</text>
</comment>
<comment type="subcellular location">
    <subcellularLocation>
        <location>Secreted</location>
    </subcellularLocation>
</comment>
<comment type="tissue specificity">
    <text>Expressed by the venom gland.</text>
</comment>
<comment type="domain">
    <text evidence="4">Has the structural arrangement of an alpha-helix connected to antiparallel beta-sheets by disulfide bonds (CS-alpha/beta).</text>
</comment>
<comment type="similarity">
    <text evidence="4">Belongs to the long (4 C-C) scorpion toxin superfamily. Sodium channel inhibitor family. Beta subfamily.</text>
</comment>
<reference key="1">
    <citation type="journal article" date="2009" name="Biochimie">
        <title>Molecular cloning and nucleotide sequence analysis of genes from a cDNA library of the scorpion Tityus discrepans.</title>
        <authorList>
            <person name="D'Suze G."/>
            <person name="Schwartz E.F."/>
            <person name="Garcia-Gomez B.I."/>
            <person name="Sevcik C."/>
            <person name="Possani L.D."/>
        </authorList>
    </citation>
    <scope>NUCLEOTIDE SEQUENCE [MRNA]</scope>
    <scope>PROTEIN SEQUENCE OF 21-36</scope>
    <source>
        <tissue>Venom</tissue>
        <tissue>Venom gland</tissue>
    </source>
</reference>
<reference key="2">
    <citation type="journal article" date="2012" name="PLoS ONE">
        <title>Identification and phylogenetic analysis of Tityus pachyurus and Tityus obscurus novel putative Na+-channel scorpion toxins.</title>
        <authorList>
            <person name="Guerrero-Vargas J.A."/>
            <person name="Mourao C.B."/>
            <person name="Quintero-Hernandez V."/>
            <person name="Possani L.D."/>
            <person name="Schwartz E.F."/>
        </authorList>
    </citation>
    <scope>NOMENCLATURE</scope>
</reference>
<keyword id="KW-0027">Amidation</keyword>
<keyword id="KW-0903">Direct protein sequencing</keyword>
<keyword id="KW-1015">Disulfide bond</keyword>
<keyword id="KW-0872">Ion channel impairing toxin</keyword>
<keyword id="KW-0528">Neurotoxin</keyword>
<keyword id="KW-0964">Secreted</keyword>
<keyword id="KW-0732">Signal</keyword>
<keyword id="KW-0800">Toxin</keyword>
<keyword id="KW-0738">Voltage-gated sodium channel impairing toxin</keyword>
<dbReference type="EMBL" id="FN392279">
    <property type="protein sequence ID" value="CAY61931.1"/>
    <property type="molecule type" value="mRNA"/>
</dbReference>
<dbReference type="SMR" id="C9X4K1"/>
<dbReference type="GO" id="GO:0005576">
    <property type="term" value="C:extracellular region"/>
    <property type="evidence" value="ECO:0007669"/>
    <property type="project" value="UniProtKB-SubCell"/>
</dbReference>
<dbReference type="GO" id="GO:0019871">
    <property type="term" value="F:sodium channel inhibitor activity"/>
    <property type="evidence" value="ECO:0007669"/>
    <property type="project" value="InterPro"/>
</dbReference>
<dbReference type="GO" id="GO:0090729">
    <property type="term" value="F:toxin activity"/>
    <property type="evidence" value="ECO:0007669"/>
    <property type="project" value="UniProtKB-KW"/>
</dbReference>
<dbReference type="GO" id="GO:0006952">
    <property type="term" value="P:defense response"/>
    <property type="evidence" value="ECO:0007669"/>
    <property type="project" value="InterPro"/>
</dbReference>
<dbReference type="CDD" id="cd23106">
    <property type="entry name" value="neurotoxins_LC_scorpion"/>
    <property type="match status" value="1"/>
</dbReference>
<dbReference type="FunFam" id="3.30.30.10:FF:000002">
    <property type="entry name" value="Alpha-like toxin BmK-M1"/>
    <property type="match status" value="1"/>
</dbReference>
<dbReference type="Gene3D" id="3.30.30.10">
    <property type="entry name" value="Knottin, scorpion toxin-like"/>
    <property type="match status" value="1"/>
</dbReference>
<dbReference type="InterPro" id="IPR044062">
    <property type="entry name" value="LCN-type_CS_alpha_beta_dom"/>
</dbReference>
<dbReference type="InterPro" id="IPR003614">
    <property type="entry name" value="Scorpion_toxin-like"/>
</dbReference>
<dbReference type="InterPro" id="IPR036574">
    <property type="entry name" value="Scorpion_toxin-like_sf"/>
</dbReference>
<dbReference type="InterPro" id="IPR018218">
    <property type="entry name" value="Scorpion_toxinL"/>
</dbReference>
<dbReference type="InterPro" id="IPR002061">
    <property type="entry name" value="Scorpion_toxinL/defensin"/>
</dbReference>
<dbReference type="Pfam" id="PF00537">
    <property type="entry name" value="Toxin_3"/>
    <property type="match status" value="1"/>
</dbReference>
<dbReference type="PRINTS" id="PR00285">
    <property type="entry name" value="SCORPNTOXIN"/>
</dbReference>
<dbReference type="SMART" id="SM00505">
    <property type="entry name" value="Knot1"/>
    <property type="match status" value="1"/>
</dbReference>
<dbReference type="SUPFAM" id="SSF57095">
    <property type="entry name" value="Scorpion toxin-like"/>
    <property type="match status" value="1"/>
</dbReference>
<dbReference type="PROSITE" id="PS51863">
    <property type="entry name" value="LCN_CSAB"/>
    <property type="match status" value="1"/>
</dbReference>
<sequence>MKGMIMLISCLMLIDVVVESKNGYIIEPKGCKYSCSWGSSTWCNRECKFKKGSSGYCAWPACWCYGLPDNVKIFDYYNNKCGK</sequence>
<protein>
    <recommendedName>
        <fullName>Toxin TdNa3</fullName>
    </recommendedName>
    <alternativeName>
        <fullName>PT-Arthr*-beta* NaTx2.4</fullName>
    </alternativeName>
</protein>
<feature type="signal peptide" evidence="3">
    <location>
        <begin position="1"/>
        <end position="20"/>
    </location>
</feature>
<feature type="chain" id="PRO_5000525367" description="Toxin TdNa3">
    <location>
        <begin position="21"/>
        <end position="81"/>
    </location>
</feature>
<feature type="domain" description="LCN-type CS-alpha/beta" evidence="2">
    <location>
        <begin position="21"/>
        <end position="82"/>
    </location>
</feature>
<feature type="modified residue" description="Cysteine amide" evidence="1">
    <location>
        <position position="81"/>
    </location>
</feature>
<feature type="disulfide bond" evidence="2">
    <location>
        <begin position="31"/>
        <end position="81"/>
    </location>
</feature>
<feature type="disulfide bond" evidence="2">
    <location>
        <begin position="35"/>
        <end position="57"/>
    </location>
</feature>
<feature type="disulfide bond" evidence="2">
    <location>
        <begin position="43"/>
        <end position="62"/>
    </location>
</feature>
<feature type="disulfide bond" evidence="2">
    <location>
        <begin position="47"/>
        <end position="64"/>
    </location>
</feature>
<organism>
    <name type="scientific">Tityus discrepans</name>
    <name type="common">Venezuelan scorpion</name>
    <dbReference type="NCBI Taxonomy" id="57059"/>
    <lineage>
        <taxon>Eukaryota</taxon>
        <taxon>Metazoa</taxon>
        <taxon>Ecdysozoa</taxon>
        <taxon>Arthropoda</taxon>
        <taxon>Chelicerata</taxon>
        <taxon>Arachnida</taxon>
        <taxon>Scorpiones</taxon>
        <taxon>Buthida</taxon>
        <taxon>Buthoidea</taxon>
        <taxon>Buthidae</taxon>
        <taxon>Tityus</taxon>
    </lineage>
</organism>
<name>SCNA3_TITDI</name>
<proteinExistence type="evidence at protein level"/>
<accession>C9X4K1</accession>